<dbReference type="EC" id="1.14.14.154"/>
<dbReference type="EMBL" id="U72657">
    <property type="protein sequence ID" value="AAC49811.2"/>
    <property type="molecule type" value="Genomic_DNA"/>
</dbReference>
<dbReference type="EMBL" id="U72658">
    <property type="protein sequence ID" value="AAC49812.2"/>
    <property type="molecule type" value="mRNA"/>
</dbReference>
<dbReference type="EMBL" id="U83840">
    <property type="protein sequence ID" value="AAC49801.2"/>
    <property type="molecule type" value="Genomic_DNA"/>
</dbReference>
<dbReference type="SMR" id="O14442"/>
<dbReference type="UniPathway" id="UPA00770">
    <property type="reaction ID" value="UER00754"/>
</dbReference>
<dbReference type="GO" id="GO:0016020">
    <property type="term" value="C:membrane"/>
    <property type="evidence" value="ECO:0007669"/>
    <property type="project" value="UniProtKB-SubCell"/>
</dbReference>
<dbReference type="GO" id="GO:0020037">
    <property type="term" value="F:heme binding"/>
    <property type="evidence" value="ECO:0007669"/>
    <property type="project" value="InterPro"/>
</dbReference>
<dbReference type="GO" id="GO:0005506">
    <property type="term" value="F:iron ion binding"/>
    <property type="evidence" value="ECO:0007669"/>
    <property type="project" value="InterPro"/>
</dbReference>
<dbReference type="GO" id="GO:0008398">
    <property type="term" value="F:sterol 14-demethylase activity"/>
    <property type="evidence" value="ECO:0007669"/>
    <property type="project" value="UniProtKB-EC"/>
</dbReference>
<dbReference type="GO" id="GO:0016126">
    <property type="term" value="P:sterol biosynthetic process"/>
    <property type="evidence" value="ECO:0007669"/>
    <property type="project" value="UniProtKB-KW"/>
</dbReference>
<dbReference type="CDD" id="cd11042">
    <property type="entry name" value="CYP51-like"/>
    <property type="match status" value="1"/>
</dbReference>
<dbReference type="FunFam" id="1.10.630.10:FF:000033">
    <property type="entry name" value="14-alpha sterol demethylase"/>
    <property type="match status" value="1"/>
</dbReference>
<dbReference type="Gene3D" id="1.10.630.10">
    <property type="entry name" value="Cytochrome P450"/>
    <property type="match status" value="1"/>
</dbReference>
<dbReference type="InterPro" id="IPR050529">
    <property type="entry name" value="CYP450_sterol_14alpha_dmase"/>
</dbReference>
<dbReference type="InterPro" id="IPR001128">
    <property type="entry name" value="Cyt_P450"/>
</dbReference>
<dbReference type="InterPro" id="IPR017972">
    <property type="entry name" value="Cyt_P450_CS"/>
</dbReference>
<dbReference type="InterPro" id="IPR002403">
    <property type="entry name" value="Cyt_P450_E_grp-IV"/>
</dbReference>
<dbReference type="InterPro" id="IPR036396">
    <property type="entry name" value="Cyt_P450_sf"/>
</dbReference>
<dbReference type="PANTHER" id="PTHR24304:SF2">
    <property type="entry name" value="24-HYDROXYCHOLESTEROL 7-ALPHA-HYDROXYLASE"/>
    <property type="match status" value="1"/>
</dbReference>
<dbReference type="PANTHER" id="PTHR24304">
    <property type="entry name" value="CYTOCHROME P450 FAMILY 7"/>
    <property type="match status" value="1"/>
</dbReference>
<dbReference type="Pfam" id="PF00067">
    <property type="entry name" value="p450"/>
    <property type="match status" value="1"/>
</dbReference>
<dbReference type="PRINTS" id="PR00465">
    <property type="entry name" value="EP450IV"/>
</dbReference>
<dbReference type="PRINTS" id="PR00385">
    <property type="entry name" value="P450"/>
</dbReference>
<dbReference type="SUPFAM" id="SSF48264">
    <property type="entry name" value="Cytochrome P450"/>
    <property type="match status" value="1"/>
</dbReference>
<dbReference type="PROSITE" id="PS00086">
    <property type="entry name" value="CYTOCHROME_P450"/>
    <property type="match status" value="1"/>
</dbReference>
<reference key="1">
    <citation type="journal article" date="1997" name="Gene">
        <title>Cloning and sequence analysis of the eburicol 14alpha-demethylase gene of the obligate biotrophic grape powdery mildew fungus.</title>
        <authorList>
            <person name="Delye C."/>
            <person name="Laigret F."/>
            <person name="Corio-Costet M.-F."/>
        </authorList>
    </citation>
    <scope>NUCLEOTIDE SEQUENCE [GENOMIC DNA / MRNA]</scope>
    <scope>VARIANT PHE-136</scope>
    <source>
        <strain>FPE11</strain>
    </source>
</reference>
<reference key="2">
    <citation type="submission" date="1999-08" db="EMBL/GenBank/DDBJ databases">
        <authorList>
            <person name="Delye C."/>
            <person name="Laigret F."/>
            <person name="Corio-Costet M.-F."/>
        </authorList>
    </citation>
    <scope>SEQUENCE REVISION TO 515-517</scope>
</reference>
<reference key="3">
    <citation type="journal article" date="1997" name="Appl. Environ. Microbiol.">
        <title>A mutation in the 14 alpha-demethylase gene of Uncinula necator that correlates with resistance to a sterol biosynthesis inhibitor.</title>
        <authorList>
            <person name="Delye C."/>
            <person name="Laigret F."/>
            <person name="Corio-Costet M.-F."/>
        </authorList>
    </citation>
    <scope>MOLECULAR BASIS OF FUNGICIDE RESISTANCE</scope>
    <source>
        <strain>PAZ11</strain>
    </source>
</reference>
<proteinExistence type="evidence at transcript level"/>
<accession>O14442</accession>
<accession>O14422</accession>
<protein>
    <recommendedName>
        <fullName>Eburicol 14-alpha-demethylase</fullName>
        <ecNumber>1.14.14.154</ecNumber>
    </recommendedName>
    <alternativeName>
        <fullName>CYPLI</fullName>
    </alternativeName>
    <alternativeName>
        <fullName>Cytochrome P450 51</fullName>
    </alternativeName>
    <alternativeName>
        <fullName>Cytochrome P450-14DM</fullName>
    </alternativeName>
    <alternativeName>
        <fullName>Cytochrome P450-LIA1</fullName>
    </alternativeName>
    <alternativeName>
        <fullName>Sterol 14-alpha demethylase</fullName>
    </alternativeName>
</protein>
<comment type="function">
    <text evidence="2 3 4">Sterol 14alpha-demethylase that plays a critical role in the third module of ergosterol biosynthesis pathway, being ergosterol the major sterol component in fungal membranes that participates in a variety of functions (By similarity). The third module or late pathway involves the ergosterol synthesis itself through consecutive reactions that mainly occur in the endoplasmic reticulum (ER) membrane (By similarity). In filamentous fungi, during the initial step of this module, lanosterol (lanosta-8,24-dien-3beta-ol) can be metabolized to eburicol (By similarity). Sterol 14alpha-demethylase catalyzes the three-step oxidative removal of the 14alpha-methyl group (C-32) of both these sterols in the form of formate, and converts eburicol and lanosterol to 14-demethyleburicol (4,4,24-trimethylergosta-8,14,24(28)-trienol) and 4,4-dimethyl-5alpha-cholesta-8,14,24-trien-3beta-ol, respectively, which are further metabolized by other enzymes in the pathway to ergosterol (By similarity). Can also use substrates not intrinsic to fungi, such as 24,25-dihydrolanosterol (DHL), producing 4,4-dimethyl-8,14-cholestadien-3-beta-ol, but at lower rates than the endogenous substrates (By similarity).</text>
</comment>
<comment type="catalytic activity">
    <reaction evidence="3">
        <text>a 14alpha-methyl steroid + 3 reduced [NADPH--hemoprotein reductase] + 3 O2 = a Delta(14) steroid + formate + 3 oxidized [NADPH--hemoprotein reductase] + 4 H2O + 4 H(+)</text>
        <dbReference type="Rhea" id="RHEA:54028"/>
        <dbReference type="Rhea" id="RHEA-COMP:11964"/>
        <dbReference type="Rhea" id="RHEA-COMP:11965"/>
        <dbReference type="ChEBI" id="CHEBI:15377"/>
        <dbReference type="ChEBI" id="CHEBI:15378"/>
        <dbReference type="ChEBI" id="CHEBI:15379"/>
        <dbReference type="ChEBI" id="CHEBI:15740"/>
        <dbReference type="ChEBI" id="CHEBI:57618"/>
        <dbReference type="ChEBI" id="CHEBI:58210"/>
        <dbReference type="ChEBI" id="CHEBI:138029"/>
        <dbReference type="ChEBI" id="CHEBI:138031"/>
        <dbReference type="EC" id="1.14.14.154"/>
    </reaction>
    <physiologicalReaction direction="left-to-right" evidence="3">
        <dbReference type="Rhea" id="RHEA:54029"/>
    </physiologicalReaction>
</comment>
<comment type="catalytic activity">
    <reaction evidence="3">
        <text>a 14alpha-methyl steroid + reduced [NADPH--hemoprotein reductase] + O2 = a 14alpha-hydroxymethyl steroid + oxidized [NADPH--hemoprotein reductase] + H2O + H(+)</text>
        <dbReference type="Rhea" id="RHEA:68060"/>
        <dbReference type="Rhea" id="RHEA-COMP:11964"/>
        <dbReference type="Rhea" id="RHEA-COMP:11965"/>
        <dbReference type="ChEBI" id="CHEBI:15377"/>
        <dbReference type="ChEBI" id="CHEBI:15378"/>
        <dbReference type="ChEBI" id="CHEBI:15379"/>
        <dbReference type="ChEBI" id="CHEBI:57618"/>
        <dbReference type="ChEBI" id="CHEBI:58210"/>
        <dbReference type="ChEBI" id="CHEBI:138029"/>
        <dbReference type="ChEBI" id="CHEBI:176901"/>
    </reaction>
    <physiologicalReaction direction="left-to-right" evidence="3">
        <dbReference type="Rhea" id="RHEA:68061"/>
    </physiologicalReaction>
</comment>
<comment type="catalytic activity">
    <reaction evidence="3">
        <text>a 14alpha-hydroxymethyl steroid + reduced [NADPH--hemoprotein reductase] + O2 = a 14alpha-formyl steroid + oxidized [NADPH--hemoprotein reductase] + 2 H2O + H(+)</text>
        <dbReference type="Rhea" id="RHEA:68064"/>
        <dbReference type="Rhea" id="RHEA-COMP:11964"/>
        <dbReference type="Rhea" id="RHEA-COMP:11965"/>
        <dbReference type="ChEBI" id="CHEBI:15377"/>
        <dbReference type="ChEBI" id="CHEBI:15378"/>
        <dbReference type="ChEBI" id="CHEBI:15379"/>
        <dbReference type="ChEBI" id="CHEBI:57618"/>
        <dbReference type="ChEBI" id="CHEBI:58210"/>
        <dbReference type="ChEBI" id="CHEBI:176901"/>
        <dbReference type="ChEBI" id="CHEBI:176902"/>
    </reaction>
    <physiologicalReaction direction="left-to-right" evidence="3">
        <dbReference type="Rhea" id="RHEA:68065"/>
    </physiologicalReaction>
</comment>
<comment type="catalytic activity">
    <reaction evidence="3">
        <text>a 14alpha-formyl steroid + reduced [NADPH--hemoprotein reductase] + O2 = a Delta(14) steroid + formate + oxidized [NADPH--hemoprotein reductase] + H2O + 2 H(+)</text>
        <dbReference type="Rhea" id="RHEA:68068"/>
        <dbReference type="Rhea" id="RHEA-COMP:11964"/>
        <dbReference type="Rhea" id="RHEA-COMP:11965"/>
        <dbReference type="ChEBI" id="CHEBI:15377"/>
        <dbReference type="ChEBI" id="CHEBI:15378"/>
        <dbReference type="ChEBI" id="CHEBI:15379"/>
        <dbReference type="ChEBI" id="CHEBI:15740"/>
        <dbReference type="ChEBI" id="CHEBI:57618"/>
        <dbReference type="ChEBI" id="CHEBI:58210"/>
        <dbReference type="ChEBI" id="CHEBI:138031"/>
        <dbReference type="ChEBI" id="CHEBI:176902"/>
    </reaction>
    <physiologicalReaction direction="left-to-right" evidence="3">
        <dbReference type="Rhea" id="RHEA:68069"/>
    </physiologicalReaction>
</comment>
<comment type="catalytic activity">
    <reaction evidence="3">
        <text>lanosterol + 3 reduced [NADPH--hemoprotein reductase] + 3 O2 = 4,4-dimethyl-5alpha-cholesta-8,14,24-trien-3beta-ol + formate + 3 oxidized [NADPH--hemoprotein reductase] + 4 H2O + 4 H(+)</text>
        <dbReference type="Rhea" id="RHEA:25286"/>
        <dbReference type="Rhea" id="RHEA-COMP:11964"/>
        <dbReference type="Rhea" id="RHEA-COMP:11965"/>
        <dbReference type="ChEBI" id="CHEBI:15377"/>
        <dbReference type="ChEBI" id="CHEBI:15378"/>
        <dbReference type="ChEBI" id="CHEBI:15379"/>
        <dbReference type="ChEBI" id="CHEBI:15740"/>
        <dbReference type="ChEBI" id="CHEBI:16521"/>
        <dbReference type="ChEBI" id="CHEBI:17813"/>
        <dbReference type="ChEBI" id="CHEBI:57618"/>
        <dbReference type="ChEBI" id="CHEBI:58210"/>
        <dbReference type="EC" id="1.14.14.154"/>
    </reaction>
    <physiologicalReaction direction="left-to-right" evidence="3">
        <dbReference type="Rhea" id="RHEA:25287"/>
    </physiologicalReaction>
</comment>
<comment type="catalytic activity">
    <reaction evidence="3">
        <text>lanosterol + reduced [NADPH--hemoprotein reductase] + O2 = 32-hydroxylanosterol + oxidized [NADPH--hemoprotein reductase] + H2O + H(+)</text>
        <dbReference type="Rhea" id="RHEA:75103"/>
        <dbReference type="Rhea" id="RHEA-COMP:11964"/>
        <dbReference type="Rhea" id="RHEA-COMP:11965"/>
        <dbReference type="ChEBI" id="CHEBI:15377"/>
        <dbReference type="ChEBI" id="CHEBI:15378"/>
        <dbReference type="ChEBI" id="CHEBI:15379"/>
        <dbReference type="ChEBI" id="CHEBI:16521"/>
        <dbReference type="ChEBI" id="CHEBI:57618"/>
        <dbReference type="ChEBI" id="CHEBI:58210"/>
        <dbReference type="ChEBI" id="CHEBI:166806"/>
    </reaction>
    <physiologicalReaction direction="left-to-right" evidence="3">
        <dbReference type="Rhea" id="RHEA:75104"/>
    </physiologicalReaction>
</comment>
<comment type="catalytic activity">
    <reaction evidence="3">
        <text>32-hydroxylanosterol + reduced [NADPH--hemoprotein reductase] + O2 = 32-oxolanosterol + oxidized [NADPH--hemoprotein reductase] + 2 H2O + H(+)</text>
        <dbReference type="Rhea" id="RHEA:75107"/>
        <dbReference type="Rhea" id="RHEA-COMP:11964"/>
        <dbReference type="Rhea" id="RHEA-COMP:11965"/>
        <dbReference type="ChEBI" id="CHEBI:15377"/>
        <dbReference type="ChEBI" id="CHEBI:15378"/>
        <dbReference type="ChEBI" id="CHEBI:15379"/>
        <dbReference type="ChEBI" id="CHEBI:57618"/>
        <dbReference type="ChEBI" id="CHEBI:58210"/>
        <dbReference type="ChEBI" id="CHEBI:166681"/>
        <dbReference type="ChEBI" id="CHEBI:166806"/>
    </reaction>
    <physiologicalReaction direction="left-to-right" evidence="3">
        <dbReference type="Rhea" id="RHEA:75108"/>
    </physiologicalReaction>
</comment>
<comment type="catalytic activity">
    <reaction evidence="3">
        <text>32-oxolanosterol + reduced [NADPH--hemoprotein reductase] + O2 = 4,4-dimethyl-5alpha-cholesta-8,14,24-trien-3beta-ol + formate + oxidized [NADPH--hemoprotein reductase] + H2O + 2 H(+)</text>
        <dbReference type="Rhea" id="RHEA:75111"/>
        <dbReference type="Rhea" id="RHEA-COMP:11964"/>
        <dbReference type="Rhea" id="RHEA-COMP:11965"/>
        <dbReference type="ChEBI" id="CHEBI:15377"/>
        <dbReference type="ChEBI" id="CHEBI:15378"/>
        <dbReference type="ChEBI" id="CHEBI:15379"/>
        <dbReference type="ChEBI" id="CHEBI:15740"/>
        <dbReference type="ChEBI" id="CHEBI:17813"/>
        <dbReference type="ChEBI" id="CHEBI:57618"/>
        <dbReference type="ChEBI" id="CHEBI:58210"/>
        <dbReference type="ChEBI" id="CHEBI:166681"/>
    </reaction>
    <physiologicalReaction direction="left-to-right" evidence="3">
        <dbReference type="Rhea" id="RHEA:75112"/>
    </physiologicalReaction>
</comment>
<comment type="catalytic activity">
    <reaction evidence="2">
        <text>eburicol + 3 reduced [NADPH--hemoprotein reductase] + 3 O2 = 14-demethyleburicol + formate + 3 oxidized [NADPH--hemoprotein reductase] + 4 H2O + 4 H(+)</text>
        <dbReference type="Rhea" id="RHEA:75439"/>
        <dbReference type="Rhea" id="RHEA-COMP:11964"/>
        <dbReference type="Rhea" id="RHEA-COMP:11965"/>
        <dbReference type="ChEBI" id="CHEBI:15377"/>
        <dbReference type="ChEBI" id="CHEBI:15378"/>
        <dbReference type="ChEBI" id="CHEBI:15379"/>
        <dbReference type="ChEBI" id="CHEBI:15740"/>
        <dbReference type="ChEBI" id="CHEBI:57618"/>
        <dbReference type="ChEBI" id="CHEBI:58210"/>
        <dbReference type="ChEBI" id="CHEBI:70315"/>
        <dbReference type="ChEBI" id="CHEBI:194330"/>
    </reaction>
    <physiologicalReaction direction="left-to-right" evidence="2">
        <dbReference type="Rhea" id="RHEA:75440"/>
    </physiologicalReaction>
</comment>
<comment type="catalytic activity">
    <reaction evidence="3">
        <text>eburicol + reduced [NADPH--hemoprotein reductase] + O2 = 32-hydroxyeburicol + oxidized [NADPH--hemoprotein reductase] + H2O + H(+)</text>
        <dbReference type="Rhea" id="RHEA:75427"/>
        <dbReference type="Rhea" id="RHEA-COMP:11964"/>
        <dbReference type="Rhea" id="RHEA-COMP:11965"/>
        <dbReference type="ChEBI" id="CHEBI:15377"/>
        <dbReference type="ChEBI" id="CHEBI:15378"/>
        <dbReference type="ChEBI" id="CHEBI:15379"/>
        <dbReference type="ChEBI" id="CHEBI:57618"/>
        <dbReference type="ChEBI" id="CHEBI:58210"/>
        <dbReference type="ChEBI" id="CHEBI:70315"/>
        <dbReference type="ChEBI" id="CHEBI:194328"/>
    </reaction>
    <physiologicalReaction direction="left-to-right" evidence="3">
        <dbReference type="Rhea" id="RHEA:75428"/>
    </physiologicalReaction>
</comment>
<comment type="catalytic activity">
    <reaction evidence="3">
        <text>32-hydroxyeburicol + reduced [NADPH--hemoprotein reductase] + O2 = 32-oxoeburicol + oxidized [NADPH--hemoprotein reductase] + 2 H2O + H(+)</text>
        <dbReference type="Rhea" id="RHEA:75431"/>
        <dbReference type="Rhea" id="RHEA-COMP:11964"/>
        <dbReference type="Rhea" id="RHEA-COMP:11965"/>
        <dbReference type="ChEBI" id="CHEBI:15377"/>
        <dbReference type="ChEBI" id="CHEBI:15378"/>
        <dbReference type="ChEBI" id="CHEBI:15379"/>
        <dbReference type="ChEBI" id="CHEBI:57618"/>
        <dbReference type="ChEBI" id="CHEBI:58210"/>
        <dbReference type="ChEBI" id="CHEBI:194328"/>
        <dbReference type="ChEBI" id="CHEBI:194329"/>
    </reaction>
    <physiologicalReaction direction="left-to-right" evidence="3">
        <dbReference type="Rhea" id="RHEA:75432"/>
    </physiologicalReaction>
</comment>
<comment type="catalytic activity">
    <reaction evidence="3">
        <text>32-oxoeburicol + reduced [NADPH--hemoprotein reductase] + O2 = 14-demethyleburicol + formate + oxidized [NADPH--hemoprotein reductase] + H2O + 2 H(+)</text>
        <dbReference type="Rhea" id="RHEA:75435"/>
        <dbReference type="Rhea" id="RHEA-COMP:11964"/>
        <dbReference type="Rhea" id="RHEA-COMP:11965"/>
        <dbReference type="ChEBI" id="CHEBI:15377"/>
        <dbReference type="ChEBI" id="CHEBI:15378"/>
        <dbReference type="ChEBI" id="CHEBI:15379"/>
        <dbReference type="ChEBI" id="CHEBI:15740"/>
        <dbReference type="ChEBI" id="CHEBI:57618"/>
        <dbReference type="ChEBI" id="CHEBI:58210"/>
        <dbReference type="ChEBI" id="CHEBI:194329"/>
        <dbReference type="ChEBI" id="CHEBI:194330"/>
    </reaction>
    <physiologicalReaction direction="left-to-right" evidence="3">
        <dbReference type="Rhea" id="RHEA:75436"/>
    </physiologicalReaction>
</comment>
<comment type="cofactor">
    <cofactor evidence="1">
        <name>heme</name>
        <dbReference type="ChEBI" id="CHEBI:30413"/>
    </cofactor>
</comment>
<comment type="pathway">
    <text>Steroid biosynthesis; zymosterol biosynthesis; zymosterol from lanosterol: step 1/6.</text>
</comment>
<comment type="subcellular location">
    <subcellularLocation>
        <location evidence="6">Membrane</location>
    </subcellularLocation>
</comment>
<comment type="similarity">
    <text evidence="6">Belongs to the cytochrome P450 family.</text>
</comment>
<keyword id="KW-0349">Heme</keyword>
<keyword id="KW-0408">Iron</keyword>
<keyword id="KW-0444">Lipid biosynthesis</keyword>
<keyword id="KW-0443">Lipid metabolism</keyword>
<keyword id="KW-0472">Membrane</keyword>
<keyword id="KW-0479">Metal-binding</keyword>
<keyword id="KW-0503">Monooxygenase</keyword>
<keyword id="KW-0560">Oxidoreductase</keyword>
<keyword id="KW-0752">Steroid biosynthesis</keyword>
<keyword id="KW-0753">Steroid metabolism</keyword>
<keyword id="KW-0756">Sterol biosynthesis</keyword>
<keyword id="KW-1207">Sterol metabolism</keyword>
<feature type="chain" id="PRO_0000052010" description="Eburicol 14-alpha-demethylase">
    <location>
        <begin position="1"/>
        <end position="524"/>
    </location>
</feature>
<feature type="binding site" description="axial binding residue" evidence="1">
    <location>
        <position position="469"/>
    </location>
    <ligand>
        <name>heme</name>
        <dbReference type="ChEBI" id="CHEBI:30413"/>
    </ligand>
    <ligandPart>
        <name>Fe</name>
        <dbReference type="ChEBI" id="CHEBI:18248"/>
    </ligandPart>
</feature>
<feature type="sequence variant" description="In strain: PAZ11; resistant to triadimenol; a sterol demethylation-inhibiting fungicide." evidence="5">
    <original>Y</original>
    <variation>F</variation>
    <location>
        <position position="136"/>
    </location>
</feature>
<name>CP51_UNCNE</name>
<organism>
    <name type="scientific">Uncinula necator</name>
    <name type="common">Grape powdery mildew</name>
    <dbReference type="NCBI Taxonomy" id="52586"/>
    <lineage>
        <taxon>Eukaryota</taxon>
        <taxon>Fungi</taxon>
        <taxon>Dikarya</taxon>
        <taxon>Ascomycota</taxon>
        <taxon>Pezizomycotina</taxon>
        <taxon>Leotiomycetes</taxon>
        <taxon>Erysiphales</taxon>
        <taxon>Erysiphaceae</taxon>
        <taxon>Erysiphe</taxon>
    </lineage>
</organism>
<evidence type="ECO:0000250" key="1"/>
<evidence type="ECO:0000250" key="2">
    <source>
        <dbReference type="UniProtKB" id="P10613"/>
    </source>
</evidence>
<evidence type="ECO:0000250" key="3">
    <source>
        <dbReference type="UniProtKB" id="P10614"/>
    </source>
</evidence>
<evidence type="ECO:0000250" key="4">
    <source>
        <dbReference type="UniProtKB" id="Q4WNT5"/>
    </source>
</evidence>
<evidence type="ECO:0000269" key="5">
    <source>
    </source>
</evidence>
<evidence type="ECO:0000305" key="6"/>
<sequence length="524" mass="59840">MYIADILSDLLTQQTTRYGWIFMVTSIAFSIILLAVGLNVLSQLLFRRPYEPPVVFHWFPIIGSTISYGIDPYKFYFDCRAKYGDIFTFILLGKKVTVYLGLQGNNFILNGKLKDVNAEEIYTNLTTPVFGRDVVYDCPNSKLMEQKKFMKTALTIEAFHSYVTIIQNEVEAYINNCVSFQGESGTVNISKVMAEITIYTASHALQGEEVRENFDSSFAALYHDLDMGFTPINFTFYWAPLPWNRARDHAQRTVARTYMNIIQARREEKRSGENKHDIMWELMRSTYKDGTPVPDREIAHMMIALLMAGQHSSSSTSSWIMLWLAARPDIMEELYEEQLRIFGSEKPFPPLQYEDLSKLQLHQNVLKEVLRLHAPIHSIMRKVKNPMIVPGTKYVIPTSHVLISSPGCTSQDATFFPDPLKWDPHRWDIGSGKVLGNDAVDEKYDYGYGLTSTGASSPYLPFGAGRHRCIGEQFATLQLVTIMATMVRFFRFRNIDGKQGVVKTDYSSLFSMPLAPALIGWEKR</sequence>
<gene>
    <name type="primary">CYP51</name>
</gene>